<protein>
    <recommendedName>
        <fullName evidence="1">DNA polymerase III PolC-type</fullName>
        <shortName evidence="1">PolIII</shortName>
        <ecNumber evidence="1">2.7.7.7</ecNumber>
    </recommendedName>
</protein>
<organism>
    <name type="scientific">Streptococcus pyogenes serotype M18 (strain MGAS8232)</name>
    <dbReference type="NCBI Taxonomy" id="186103"/>
    <lineage>
        <taxon>Bacteria</taxon>
        <taxon>Bacillati</taxon>
        <taxon>Bacillota</taxon>
        <taxon>Bacilli</taxon>
        <taxon>Lactobacillales</taxon>
        <taxon>Streptococcaceae</taxon>
        <taxon>Streptococcus</taxon>
    </lineage>
</organism>
<reference key="1">
    <citation type="journal article" date="2002" name="Proc. Natl. Acad. Sci. U.S.A.">
        <title>Genome sequence and comparative microarray analysis of serotype M18 group A Streptococcus strains associated with acute rheumatic fever outbreaks.</title>
        <authorList>
            <person name="Smoot J.C."/>
            <person name="Barbian K.D."/>
            <person name="Van Gompel J.J."/>
            <person name="Smoot L.M."/>
            <person name="Chaussee M.S."/>
            <person name="Sylva G.L."/>
            <person name="Sturdevant D.E."/>
            <person name="Ricklefs S.M."/>
            <person name="Porcella S.F."/>
            <person name="Parkins L.D."/>
            <person name="Beres S.B."/>
            <person name="Campbell D.S."/>
            <person name="Smith T.M."/>
            <person name="Zhang Q."/>
            <person name="Kapur V."/>
            <person name="Daly J.A."/>
            <person name="Veasy L.G."/>
            <person name="Musser J.M."/>
        </authorList>
    </citation>
    <scope>NUCLEOTIDE SEQUENCE [LARGE SCALE GENOMIC DNA]</scope>
    <source>
        <strain>MGAS8232</strain>
    </source>
</reference>
<accession>Q8NZB5</accession>
<comment type="function">
    <text evidence="1">Required for replicative DNA synthesis. This DNA polymerase also exhibits 3' to 5' exonuclease activity.</text>
</comment>
<comment type="catalytic activity">
    <reaction evidence="1">
        <text>DNA(n) + a 2'-deoxyribonucleoside 5'-triphosphate = DNA(n+1) + diphosphate</text>
        <dbReference type="Rhea" id="RHEA:22508"/>
        <dbReference type="Rhea" id="RHEA-COMP:17339"/>
        <dbReference type="Rhea" id="RHEA-COMP:17340"/>
        <dbReference type="ChEBI" id="CHEBI:33019"/>
        <dbReference type="ChEBI" id="CHEBI:61560"/>
        <dbReference type="ChEBI" id="CHEBI:173112"/>
        <dbReference type="EC" id="2.7.7.7"/>
    </reaction>
</comment>
<comment type="subcellular location">
    <subcellularLocation>
        <location evidence="1">Cytoplasm</location>
    </subcellularLocation>
</comment>
<comment type="similarity">
    <text evidence="1">Belongs to the DNA polymerase type-C family. PolC subfamily.</text>
</comment>
<dbReference type="EC" id="2.7.7.7" evidence="1"/>
<dbReference type="EMBL" id="AE009949">
    <property type="protein sequence ID" value="AAL98506.1"/>
    <property type="molecule type" value="Genomic_DNA"/>
</dbReference>
<dbReference type="RefSeq" id="WP_011018243.1">
    <property type="nucleotide sequence ID" value="NC_003485.1"/>
</dbReference>
<dbReference type="SMR" id="Q8NZB5"/>
<dbReference type="KEGG" id="spm:spyM18_2028"/>
<dbReference type="HOGENOM" id="CLU_003297_2_0_9"/>
<dbReference type="GO" id="GO:0005737">
    <property type="term" value="C:cytoplasm"/>
    <property type="evidence" value="ECO:0007669"/>
    <property type="project" value="UniProtKB-SubCell"/>
</dbReference>
<dbReference type="GO" id="GO:0008408">
    <property type="term" value="F:3'-5' exonuclease activity"/>
    <property type="evidence" value="ECO:0007669"/>
    <property type="project" value="UniProtKB-UniRule"/>
</dbReference>
<dbReference type="GO" id="GO:0003677">
    <property type="term" value="F:DNA binding"/>
    <property type="evidence" value="ECO:0007669"/>
    <property type="project" value="UniProtKB-UniRule"/>
</dbReference>
<dbReference type="GO" id="GO:0003887">
    <property type="term" value="F:DNA-directed DNA polymerase activity"/>
    <property type="evidence" value="ECO:0007669"/>
    <property type="project" value="UniProtKB-UniRule"/>
</dbReference>
<dbReference type="GO" id="GO:0006261">
    <property type="term" value="P:DNA-templated DNA replication"/>
    <property type="evidence" value="ECO:0007669"/>
    <property type="project" value="UniProtKB-UniRule"/>
</dbReference>
<dbReference type="CDD" id="cd06127">
    <property type="entry name" value="DEDDh"/>
    <property type="match status" value="1"/>
</dbReference>
<dbReference type="CDD" id="cd07435">
    <property type="entry name" value="PHP_PolIIIA_POLC"/>
    <property type="match status" value="1"/>
</dbReference>
<dbReference type="CDD" id="cd04484">
    <property type="entry name" value="polC_OBF"/>
    <property type="match status" value="1"/>
</dbReference>
<dbReference type="FunFam" id="3.30.420.10:FF:000045">
    <property type="entry name" value="3'-5' exonuclease DinG"/>
    <property type="match status" value="1"/>
</dbReference>
<dbReference type="Gene3D" id="1.10.150.870">
    <property type="match status" value="1"/>
</dbReference>
<dbReference type="Gene3D" id="3.30.1900.20">
    <property type="match status" value="1"/>
</dbReference>
<dbReference type="Gene3D" id="6.10.140.1510">
    <property type="match status" value="1"/>
</dbReference>
<dbReference type="Gene3D" id="3.20.20.140">
    <property type="entry name" value="Metal-dependent hydrolases"/>
    <property type="match status" value="1"/>
</dbReference>
<dbReference type="Gene3D" id="2.40.50.140">
    <property type="entry name" value="Nucleic acid-binding proteins"/>
    <property type="match status" value="1"/>
</dbReference>
<dbReference type="Gene3D" id="1.10.150.700">
    <property type="entry name" value="PolC, middle finger domain"/>
    <property type="match status" value="1"/>
</dbReference>
<dbReference type="Gene3D" id="3.30.420.10">
    <property type="entry name" value="Ribonuclease H-like superfamily/Ribonuclease H"/>
    <property type="match status" value="1"/>
</dbReference>
<dbReference type="HAMAP" id="MF_00356">
    <property type="entry name" value="DNApol_PolC"/>
    <property type="match status" value="1"/>
</dbReference>
<dbReference type="InterPro" id="IPR011708">
    <property type="entry name" value="DNA_pol3_alpha_NTPase_dom"/>
</dbReference>
<dbReference type="InterPro" id="IPR040982">
    <property type="entry name" value="DNA_pol3_finger"/>
</dbReference>
<dbReference type="InterPro" id="IPR024754">
    <property type="entry name" value="DNA_PolC-like_N_II"/>
</dbReference>
<dbReference type="InterPro" id="IPR028112">
    <property type="entry name" value="DNA_PolC-type_N_I"/>
</dbReference>
<dbReference type="InterPro" id="IPR004805">
    <property type="entry name" value="DnaE2/DnaE/PolC"/>
</dbReference>
<dbReference type="InterPro" id="IPR029460">
    <property type="entry name" value="DNAPol_HHH"/>
</dbReference>
<dbReference type="InterPro" id="IPR006054">
    <property type="entry name" value="DnaQ"/>
</dbReference>
<dbReference type="InterPro" id="IPR013520">
    <property type="entry name" value="Exonuclease_RNaseT/DNA_pol3"/>
</dbReference>
<dbReference type="InterPro" id="IPR012340">
    <property type="entry name" value="NA-bd_OB-fold"/>
</dbReference>
<dbReference type="InterPro" id="IPR004013">
    <property type="entry name" value="PHP_dom"/>
</dbReference>
<dbReference type="InterPro" id="IPR003141">
    <property type="entry name" value="Pol/His_phosphatase_N"/>
</dbReference>
<dbReference type="InterPro" id="IPR016195">
    <property type="entry name" value="Pol/histidinol_Pase-like"/>
</dbReference>
<dbReference type="InterPro" id="IPR006308">
    <property type="entry name" value="Pol_III_a_PolC-type_gram_pos"/>
</dbReference>
<dbReference type="InterPro" id="IPR044923">
    <property type="entry name" value="PolC_middle_finger_sf"/>
</dbReference>
<dbReference type="InterPro" id="IPR012337">
    <property type="entry name" value="RNaseH-like_sf"/>
</dbReference>
<dbReference type="InterPro" id="IPR036397">
    <property type="entry name" value="RNaseH_sf"/>
</dbReference>
<dbReference type="NCBIfam" id="TIGR00573">
    <property type="entry name" value="dnaq"/>
    <property type="match status" value="1"/>
</dbReference>
<dbReference type="NCBIfam" id="TIGR01405">
    <property type="entry name" value="polC_Gram_pos"/>
    <property type="match status" value="1"/>
</dbReference>
<dbReference type="NCBIfam" id="NF001688">
    <property type="entry name" value="PRK00448.1"/>
    <property type="match status" value="1"/>
</dbReference>
<dbReference type="PANTHER" id="PTHR32294:SF5">
    <property type="entry name" value="DNA POLYMERASE III POLC-TYPE"/>
    <property type="match status" value="1"/>
</dbReference>
<dbReference type="PANTHER" id="PTHR32294">
    <property type="entry name" value="DNA POLYMERASE III SUBUNIT ALPHA"/>
    <property type="match status" value="1"/>
</dbReference>
<dbReference type="Pfam" id="PF14480">
    <property type="entry name" value="DNA_pol3_a_NI"/>
    <property type="match status" value="1"/>
</dbReference>
<dbReference type="Pfam" id="PF11490">
    <property type="entry name" value="DNA_pol3_a_NII"/>
    <property type="match status" value="1"/>
</dbReference>
<dbReference type="Pfam" id="PF07733">
    <property type="entry name" value="DNA_pol3_alpha"/>
    <property type="match status" value="2"/>
</dbReference>
<dbReference type="Pfam" id="PF17657">
    <property type="entry name" value="DNA_pol3_finger"/>
    <property type="match status" value="1"/>
</dbReference>
<dbReference type="Pfam" id="PF14579">
    <property type="entry name" value="HHH_6"/>
    <property type="match status" value="1"/>
</dbReference>
<dbReference type="Pfam" id="PF02811">
    <property type="entry name" value="PHP"/>
    <property type="match status" value="2"/>
</dbReference>
<dbReference type="Pfam" id="PF00929">
    <property type="entry name" value="RNase_T"/>
    <property type="match status" value="1"/>
</dbReference>
<dbReference type="SMART" id="SM00479">
    <property type="entry name" value="EXOIII"/>
    <property type="match status" value="1"/>
</dbReference>
<dbReference type="SMART" id="SM00481">
    <property type="entry name" value="POLIIIAc"/>
    <property type="match status" value="1"/>
</dbReference>
<dbReference type="SUPFAM" id="SSF50249">
    <property type="entry name" value="Nucleic acid-binding proteins"/>
    <property type="match status" value="1"/>
</dbReference>
<dbReference type="SUPFAM" id="SSF89550">
    <property type="entry name" value="PHP domain-like"/>
    <property type="match status" value="1"/>
</dbReference>
<dbReference type="SUPFAM" id="SSF53098">
    <property type="entry name" value="Ribonuclease H-like"/>
    <property type="match status" value="1"/>
</dbReference>
<feature type="chain" id="PRO_0000204604" description="DNA polymerase III PolC-type">
    <location>
        <begin position="1"/>
        <end position="1465"/>
    </location>
</feature>
<feature type="domain" description="Exonuclease">
    <location>
        <begin position="427"/>
        <end position="583"/>
    </location>
</feature>
<sequence>MSDLFAKLMDQIEMPLDMRRSSAFSSADIIEVKVHSVSRLWEFHFAFAAVLPIATYRELHDRLIRTFEAADIKVTFDIQAAQVDYSDDLLQAYYQEAFEHAPCNSASFKSSFSKLKVTYEDDKLIIAAPRFVNNDHFRNNHLPNLVKQFEAFGFGTLTIDMVSDQEMTEHLTKDFVSSRQALVKKAVQDNLEAQKSLEAMMPPVEEATPAPKFDYKERAAKRQAGFEKATITPMIEIETEENRIVFEGMVFDVERKTTRTGRHIINFKMTDYTSSFALQKWAKDDEELRKFDMIAKGAWLRVQGNIETNPFTKSLTMNVQQVKEIVHHDRKDLMPEGQKRVELHAHTNMSTMDALPTVESLIDTAAKWGHKAVAITDHANVQSFPHGYHRARKAGIKAIFGLEANIVEDKVPISYDPVDMDLHEATYVVFDVETTGLSAMNNDLIQIAASKMFKGNIVEQFDEFIDPGHPLSAFTTELTGITDKHLQGAKPLVTVLKAFQDFCKDSILVAHNASFDVGFMNANYERHNLPKITQPVIDTLEFARNLYPEYKRHGLGPLTKRFQVSLDHHHMANYDAEATGRLLFIFLRDAREKHGIKNLLQLNTDLVAEDSYKKARIKHATIYVQNQVGLKNMFKLVSLSNIKYFEGVPRIPRTVLDAHREGLLLGTACSDGEVFDAVLTKGIDAAVDLAKYYDFIEIMPPAIYQPLVVRELIKDQAGIEQVIRDLIEVGKRAKKPVLATGNVHYLEPEEEIYREIIVRSLGQGAMINRTIGRGEGAQPAPLPKAHFRTTNEMLDEFAFLGKDLAYQVVVQNTQDFADRIEEVEVVKGDLYTPYIDKAEETVAELTYQKAFEIYGNPLPDIIDLRIEKELTSILGNGFAVIYLASQMLVNRSNERGYLVGSRGSVGSSFVATMIGITEVNPMPPHYVCPSCQHSEFITDGSVGSGYDLPNKPCPKCGTPYQKDGQDIPFETFLGFDGDKVPDIDLNFSGDDQPSAHLDVRDIFGDEYAFRAGTVGTVAEKTAYGFVKGYERDYGKFYRDAEVDRLAAGAAGVKRTTGQHPGGIVVIPNYMDVYDFTPVQYPADDVTASWQTTHFNFHDIDENVLKLDILGHDDPTMIRKLQDLSGIDPITIPADDPGVMALFSGTEILGVTPEQIGTPTGMLGIPEFGTNFVRGMVNETHPTTFAELLQLSGLSHGTDVWLGNAQDLIKEGIATLKTVIGCRDDIMVYLMHAGLEPKMAFTIMERVRKGLWLKISEEERNGYIDAMRENNVPDWYIESCGKIKYMFPKAHAAAYVLMALRVAYFKVHHPIMYYCAYFSIRAKAFELKTMSGGLDAVKARMEDITIKRKNNEATNVENDLFTTLEIVNEMLERGFKFGKLDLYKSDAIEFQIKGDTLIPPFIALEGLGENVAKQIVKARQEGEFLSKMELRKRGGASSTLVEKMDEMGILGNMPEDNQLSLFDDFF</sequence>
<name>DPO3_STRP8</name>
<proteinExistence type="inferred from homology"/>
<keyword id="KW-0963">Cytoplasm</keyword>
<keyword id="KW-0235">DNA replication</keyword>
<keyword id="KW-0239">DNA-directed DNA polymerase</keyword>
<keyword id="KW-0269">Exonuclease</keyword>
<keyword id="KW-0378">Hydrolase</keyword>
<keyword id="KW-0540">Nuclease</keyword>
<keyword id="KW-0548">Nucleotidyltransferase</keyword>
<keyword id="KW-0808">Transferase</keyword>
<evidence type="ECO:0000255" key="1">
    <source>
        <dbReference type="HAMAP-Rule" id="MF_00356"/>
    </source>
</evidence>
<gene>
    <name evidence="1" type="primary">polC</name>
    <name type="synonym">dnaE</name>
    <name type="ordered locus">spyM18_2028</name>
</gene>